<evidence type="ECO:0000250" key="1"/>
<evidence type="ECO:0000250" key="2">
    <source>
        <dbReference type="UniProtKB" id="Q96CJ1"/>
    </source>
</evidence>
<evidence type="ECO:0000256" key="3">
    <source>
        <dbReference type="SAM" id="MobiDB-lite"/>
    </source>
</evidence>
<evidence type="ECO:0000269" key="4">
    <source>
    </source>
</evidence>
<evidence type="ECO:0000305" key="5"/>
<gene>
    <name type="primary">Eaf2</name>
    <name type="synonym">Traits</name>
</gene>
<organism>
    <name type="scientific">Rattus norvegicus</name>
    <name type="common">Rat</name>
    <dbReference type="NCBI Taxonomy" id="10116"/>
    <lineage>
        <taxon>Eukaryota</taxon>
        <taxon>Metazoa</taxon>
        <taxon>Chordata</taxon>
        <taxon>Craniata</taxon>
        <taxon>Vertebrata</taxon>
        <taxon>Euteleostomi</taxon>
        <taxon>Mammalia</taxon>
        <taxon>Eutheria</taxon>
        <taxon>Euarchontoglires</taxon>
        <taxon>Glires</taxon>
        <taxon>Rodentia</taxon>
        <taxon>Myomorpha</taxon>
        <taxon>Muroidea</taxon>
        <taxon>Muridae</taxon>
        <taxon>Murinae</taxon>
        <taxon>Rattus</taxon>
    </lineage>
</organism>
<comment type="function">
    <text evidence="1 4">Acts as a transcriptional transactivator of ELL, ELL2 and TCEA1 elongation activities (By similarity). Potent inducer of apoptosis in prostatic and non-prostatic cell lines.</text>
</comment>
<comment type="subunit">
    <text evidence="1">Component of the super elongation complex (SEC), at least composed of EAF1, EAF2, CDK9, MLLT3/AF9, AFF (AFF1 or AFF4), the P-TEFb complex and ELL (ELL, ELL2 or ELL3). Interacts with ELL, ELL2 and TCEA1 (By similarity).</text>
</comment>
<comment type="subcellular location">
    <subcellularLocation>
        <location evidence="2">Nucleus speckle</location>
    </subcellularLocation>
</comment>
<comment type="similarity">
    <text evidence="5">Belongs to the EAF family.</text>
</comment>
<feature type="chain" id="PRO_0000130339" description="ELL-associated factor 2">
    <location>
        <begin position="1"/>
        <end position="262"/>
    </location>
</feature>
<feature type="region of interest" description="Necessary for interaction with ELL" evidence="1">
    <location>
        <begin position="17"/>
        <end position="104"/>
    </location>
</feature>
<feature type="region of interest" description="Disordered" evidence="3">
    <location>
        <begin position="124"/>
        <end position="154"/>
    </location>
</feature>
<feature type="region of interest" description="Disordered" evidence="3">
    <location>
        <begin position="170"/>
        <end position="232"/>
    </location>
</feature>
<feature type="region of interest" description="Necessary for transactivation activity" evidence="1">
    <location>
        <begin position="177"/>
        <end position="262"/>
    </location>
</feature>
<feature type="region of interest" description="Necessary for interaction with TCEA1 and transactivation activity" evidence="1">
    <location>
        <begin position="248"/>
        <end position="262"/>
    </location>
</feature>
<feature type="compositionally biased region" description="Polar residues" evidence="3">
    <location>
        <begin position="124"/>
        <end position="144"/>
    </location>
</feature>
<feature type="compositionally biased region" description="Low complexity" evidence="3">
    <location>
        <begin position="174"/>
        <end position="192"/>
    </location>
</feature>
<feature type="modified residue" description="Phosphoserine" evidence="2">
    <location>
        <position position="146"/>
    </location>
</feature>
<feature type="modified residue" description="Phosphoserine" evidence="2">
    <location>
        <position position="151"/>
    </location>
</feature>
<feature type="modified residue" description="Phosphoserine" evidence="2">
    <location>
        <position position="154"/>
    </location>
</feature>
<keyword id="KW-0010">Activator</keyword>
<keyword id="KW-0053">Apoptosis</keyword>
<keyword id="KW-0539">Nucleus</keyword>
<keyword id="KW-0597">Phosphoprotein</keyword>
<keyword id="KW-1185">Reference proteome</keyword>
<keyword id="KW-0804">Transcription</keyword>
<keyword id="KW-0805">Transcription regulation</keyword>
<accession>Q811X5</accession>
<dbReference type="EMBL" id="AY049022">
    <property type="protein sequence ID" value="AAL12225.1"/>
    <property type="molecule type" value="mRNA"/>
</dbReference>
<dbReference type="RefSeq" id="NP_742044.1">
    <property type="nucleotide sequence ID" value="NM_172047.1"/>
</dbReference>
<dbReference type="SMR" id="Q811X5"/>
<dbReference type="FunCoup" id="Q811X5">
    <property type="interactions" value="183"/>
</dbReference>
<dbReference type="STRING" id="10116.ENSRNOP00000003208"/>
<dbReference type="CarbonylDB" id="Q811X5"/>
<dbReference type="PhosphoSitePlus" id="Q811X5"/>
<dbReference type="PaxDb" id="10116-ENSRNOP00000003208"/>
<dbReference type="Ensembl" id="ENSRNOT00000003208.6">
    <property type="protein sequence ID" value="ENSRNOP00000003208.5"/>
    <property type="gene ID" value="ENSRNOG00000002350.6"/>
</dbReference>
<dbReference type="GeneID" id="266787"/>
<dbReference type="KEGG" id="rno:266787"/>
<dbReference type="UCSC" id="RGD:628879">
    <property type="organism name" value="rat"/>
</dbReference>
<dbReference type="AGR" id="RGD:628879"/>
<dbReference type="CTD" id="55840"/>
<dbReference type="RGD" id="628879">
    <property type="gene designation" value="Eaf2"/>
</dbReference>
<dbReference type="eggNOG" id="KOG4795">
    <property type="taxonomic scope" value="Eukaryota"/>
</dbReference>
<dbReference type="GeneTree" id="ENSGT00390000017724"/>
<dbReference type="HOGENOM" id="CLU_025755_1_0_1"/>
<dbReference type="InParanoid" id="Q811X5"/>
<dbReference type="OMA" id="CLLFFDH"/>
<dbReference type="OrthoDB" id="125903at2759"/>
<dbReference type="PhylomeDB" id="Q811X5"/>
<dbReference type="TreeFam" id="TF320864"/>
<dbReference type="Reactome" id="R-RNO-112382">
    <property type="pathway name" value="Formation of RNA Pol II elongation complex"/>
</dbReference>
<dbReference type="Reactome" id="R-RNO-674695">
    <property type="pathway name" value="RNA Polymerase II Pre-transcription Events"/>
</dbReference>
<dbReference type="Reactome" id="R-RNO-75955">
    <property type="pathway name" value="RNA Polymerase II Transcription Elongation"/>
</dbReference>
<dbReference type="PRO" id="PR:Q811X5"/>
<dbReference type="Proteomes" id="UP000002494">
    <property type="component" value="Chromosome 11"/>
</dbReference>
<dbReference type="Bgee" id="ENSRNOG00000002350">
    <property type="expression patterns" value="Expressed in spleen and 11 other cell types or tissues"/>
</dbReference>
<dbReference type="GO" id="GO:0016607">
    <property type="term" value="C:nuclear speck"/>
    <property type="evidence" value="ECO:0007669"/>
    <property type="project" value="UniProtKB-SubCell"/>
</dbReference>
<dbReference type="GO" id="GO:0005654">
    <property type="term" value="C:nucleoplasm"/>
    <property type="evidence" value="ECO:0000250"/>
    <property type="project" value="UniProtKB"/>
</dbReference>
<dbReference type="GO" id="GO:0032783">
    <property type="term" value="C:super elongation complex"/>
    <property type="evidence" value="ECO:0007669"/>
    <property type="project" value="InterPro"/>
</dbReference>
<dbReference type="GO" id="GO:0008023">
    <property type="term" value="C:transcription elongation factor complex"/>
    <property type="evidence" value="ECO:0000250"/>
    <property type="project" value="UniProtKB"/>
</dbReference>
<dbReference type="GO" id="GO:0003711">
    <property type="term" value="F:transcription elongation factor activity"/>
    <property type="evidence" value="ECO:0000266"/>
    <property type="project" value="RGD"/>
</dbReference>
<dbReference type="GO" id="GO:0006915">
    <property type="term" value="P:apoptotic process"/>
    <property type="evidence" value="ECO:0007669"/>
    <property type="project" value="UniProtKB-KW"/>
</dbReference>
<dbReference type="GO" id="GO:0060767">
    <property type="term" value="P:epithelial cell proliferation involved in prostate gland development"/>
    <property type="evidence" value="ECO:0000266"/>
    <property type="project" value="RGD"/>
</dbReference>
<dbReference type="GO" id="GO:0030308">
    <property type="term" value="P:negative regulation of cell growth"/>
    <property type="evidence" value="ECO:0000266"/>
    <property type="project" value="RGD"/>
</dbReference>
<dbReference type="GO" id="GO:0060770">
    <property type="term" value="P:negative regulation of epithelial cell proliferation involved in prostate gland development"/>
    <property type="evidence" value="ECO:0000266"/>
    <property type="project" value="RGD"/>
</dbReference>
<dbReference type="GO" id="GO:0045893">
    <property type="term" value="P:positive regulation of DNA-templated transcription"/>
    <property type="evidence" value="ECO:0000250"/>
    <property type="project" value="UniProtKB"/>
</dbReference>
<dbReference type="GO" id="GO:0045944">
    <property type="term" value="P:positive regulation of transcription by RNA polymerase II"/>
    <property type="evidence" value="ECO:0000266"/>
    <property type="project" value="RGD"/>
</dbReference>
<dbReference type="GO" id="GO:0034243">
    <property type="term" value="P:regulation of transcription elongation by RNA polymerase II"/>
    <property type="evidence" value="ECO:0000266"/>
    <property type="project" value="RGD"/>
</dbReference>
<dbReference type="GO" id="GO:0006368">
    <property type="term" value="P:transcription elongation by RNA polymerase II"/>
    <property type="evidence" value="ECO:0000318"/>
    <property type="project" value="GO_Central"/>
</dbReference>
<dbReference type="InterPro" id="IPR027093">
    <property type="entry name" value="EAF_fam"/>
</dbReference>
<dbReference type="InterPro" id="IPR019194">
    <property type="entry name" value="Tscrpt_elong_fac_Eaf_N"/>
</dbReference>
<dbReference type="PANTHER" id="PTHR15970:SF7">
    <property type="entry name" value="ELL-ASSOCIATED FACTOR 2"/>
    <property type="match status" value="1"/>
</dbReference>
<dbReference type="PANTHER" id="PTHR15970">
    <property type="entry name" value="ELL-ASSOCIATED FACTOR EAF"/>
    <property type="match status" value="1"/>
</dbReference>
<dbReference type="Pfam" id="PF09816">
    <property type="entry name" value="EAF"/>
    <property type="match status" value="1"/>
</dbReference>
<protein>
    <recommendedName>
        <fullName>ELL-associated factor 2</fullName>
    </recommendedName>
    <alternativeName>
        <fullName>Testosterone-regulated apoptosis inducer and tumor suppressor protein</fullName>
    </alternativeName>
</protein>
<reference key="1">
    <citation type="journal article" date="2003" name="Cancer Res.">
        <title>Suppression of prostate tumor growth by U19, a novel testosterone-regulated apoptosis inducer.</title>
        <authorList>
            <person name="Xiao W."/>
            <person name="Zhang Q."/>
            <person name="Jiang F."/>
            <person name="Pins M."/>
            <person name="Kozlowski J.M."/>
            <person name="Wang Z."/>
        </authorList>
    </citation>
    <scope>NUCLEOTIDE SEQUENCE [MRNA]</scope>
    <scope>FUNCTION IN APOPTOSIS</scope>
    <source>
        <strain>Sprague-Dawley</strain>
    </source>
</reference>
<name>EAF2_RAT</name>
<sequence>MNGPAGLAYLDRRERILKLGESFEKQPRCAFHTVRYDFKPASVDASCEGNLEVGKGEQVTITLPNIEGSTPPVTVFKGSKRPYLKECILIINHDTGECRLEKLSSNITVKKTRGEGSSKIQCRLEQQQQQMWNPPRTSNLVQHSPSEDKLSPTSLMDDIERELKAEASLMDQMSSCDSSSDSRSSSSSSSEDSSSDSEDDDRSSPSGPRRYSSEHPSVSAGPQYRTSDADTTCNRLYDNSALLMSTLRSDLQLSESDSDSED</sequence>
<proteinExistence type="evidence at protein level"/>